<keyword id="KW-0030">Aminoacyl-tRNA synthetase</keyword>
<keyword id="KW-0067">ATP-binding</keyword>
<keyword id="KW-0963">Cytoplasm</keyword>
<keyword id="KW-0436">Ligase</keyword>
<keyword id="KW-0547">Nucleotide-binding</keyword>
<keyword id="KW-0648">Protein biosynthesis</keyword>
<keyword id="KW-1185">Reference proteome</keyword>
<comment type="function">
    <text evidence="1">Catalyzes the attachment of glutamate to tRNA(Glu) in a two-step reaction: glutamate is first activated by ATP to form Glu-AMP and then transferred to the acceptor end of tRNA(Glu).</text>
</comment>
<comment type="catalytic activity">
    <reaction evidence="1">
        <text>tRNA(Glu) + L-glutamate + ATP = L-glutamyl-tRNA(Glu) + AMP + diphosphate</text>
        <dbReference type="Rhea" id="RHEA:23540"/>
        <dbReference type="Rhea" id="RHEA-COMP:9663"/>
        <dbReference type="Rhea" id="RHEA-COMP:9680"/>
        <dbReference type="ChEBI" id="CHEBI:29985"/>
        <dbReference type="ChEBI" id="CHEBI:30616"/>
        <dbReference type="ChEBI" id="CHEBI:33019"/>
        <dbReference type="ChEBI" id="CHEBI:78442"/>
        <dbReference type="ChEBI" id="CHEBI:78520"/>
        <dbReference type="ChEBI" id="CHEBI:456215"/>
        <dbReference type="EC" id="6.1.1.17"/>
    </reaction>
</comment>
<comment type="subunit">
    <text evidence="1">Monomer.</text>
</comment>
<comment type="subcellular location">
    <subcellularLocation>
        <location evidence="1">Cytoplasm</location>
    </subcellularLocation>
</comment>
<comment type="similarity">
    <text evidence="1">Belongs to the class-I aminoacyl-tRNA synthetase family. Glutamate--tRNA ligase type 1 subfamily.</text>
</comment>
<name>SYE_LIGS1</name>
<gene>
    <name evidence="1" type="primary">gltX</name>
    <name type="ordered locus">LSL_1248</name>
</gene>
<proteinExistence type="inferred from homology"/>
<feature type="chain" id="PRO_1000001915" description="Glutamate--tRNA ligase">
    <location>
        <begin position="1"/>
        <end position="495"/>
    </location>
</feature>
<feature type="short sequence motif" description="'HIGH' region" evidence="1">
    <location>
        <begin position="12"/>
        <end position="22"/>
    </location>
</feature>
<feature type="short sequence motif" description="'KMSKS' region" evidence="1">
    <location>
        <begin position="259"/>
        <end position="263"/>
    </location>
</feature>
<feature type="binding site" evidence="1">
    <location>
        <position position="262"/>
    </location>
    <ligand>
        <name>ATP</name>
        <dbReference type="ChEBI" id="CHEBI:30616"/>
    </ligand>
</feature>
<sequence length="495" mass="57068">MAKNKIRVRYAPSPTGHLHIGNARTALFNYLFARHNKGTFVLRIEDTDTKRNIADGEKSQMDNLEWLGIDWDEGPDKPGKYGPYRQSERKDIYKPLIQELLDKDLAYESFMTEEELQAQREEQKARGEAPRYVYEYEGMSKEEIKKAQDEARAKGLKPVVRIRVPHNKTYEWDDIVKGKISFLSDTIGGDFVIQKRDGMPTYNFAVVVDDHLMEITHVLRGDDHVANTPKQLVVYEAFGWKAPEFGHMSLIINTETGKKLSKRDETVLQFIEQYRELGYLPDAMFNFITLLGWSPVGESEIFNKQEFIKMFDAKRLSKSPAAFDGKKLEWINNQYVKAAKEDEIMDSSLRQLIKAGKVQADPDAYTIEWARKLISLYKQQMSYTGQIVEMADVFFNEPPVLSEDAKKELADESAAIVLKEFAERVKDLPIFDAVEIQNTIRSIQKDTKIKGRKLYMPIRIATTREMHGPELAPSIELLGREKALKHLKQTLEEMN</sequence>
<organism>
    <name type="scientific">Ligilactobacillus salivarius (strain UCC118)</name>
    <name type="common">Lactobacillus salivarius</name>
    <dbReference type="NCBI Taxonomy" id="362948"/>
    <lineage>
        <taxon>Bacteria</taxon>
        <taxon>Bacillati</taxon>
        <taxon>Bacillota</taxon>
        <taxon>Bacilli</taxon>
        <taxon>Lactobacillales</taxon>
        <taxon>Lactobacillaceae</taxon>
        <taxon>Ligilactobacillus</taxon>
    </lineage>
</organism>
<evidence type="ECO:0000255" key="1">
    <source>
        <dbReference type="HAMAP-Rule" id="MF_00022"/>
    </source>
</evidence>
<dbReference type="EC" id="6.1.1.17" evidence="1"/>
<dbReference type="EMBL" id="CP000233">
    <property type="protein sequence ID" value="ABE00055.1"/>
    <property type="molecule type" value="Genomic_DNA"/>
</dbReference>
<dbReference type="RefSeq" id="WP_003700687.1">
    <property type="nucleotide sequence ID" value="NC_007929.1"/>
</dbReference>
<dbReference type="RefSeq" id="YP_536138.1">
    <property type="nucleotide sequence ID" value="NC_007929.1"/>
</dbReference>
<dbReference type="SMR" id="Q1WSS4"/>
<dbReference type="STRING" id="362948.LSL_1248"/>
<dbReference type="GeneID" id="89465977"/>
<dbReference type="KEGG" id="lsl:LSL_1248"/>
<dbReference type="PATRIC" id="fig|362948.14.peg.1322"/>
<dbReference type="HOGENOM" id="CLU_015768_6_1_9"/>
<dbReference type="OrthoDB" id="9807503at2"/>
<dbReference type="Proteomes" id="UP000006559">
    <property type="component" value="Chromosome"/>
</dbReference>
<dbReference type="GO" id="GO:0005829">
    <property type="term" value="C:cytosol"/>
    <property type="evidence" value="ECO:0007669"/>
    <property type="project" value="TreeGrafter"/>
</dbReference>
<dbReference type="GO" id="GO:0005524">
    <property type="term" value="F:ATP binding"/>
    <property type="evidence" value="ECO:0007669"/>
    <property type="project" value="UniProtKB-UniRule"/>
</dbReference>
<dbReference type="GO" id="GO:0004818">
    <property type="term" value="F:glutamate-tRNA ligase activity"/>
    <property type="evidence" value="ECO:0007669"/>
    <property type="project" value="UniProtKB-UniRule"/>
</dbReference>
<dbReference type="GO" id="GO:0000049">
    <property type="term" value="F:tRNA binding"/>
    <property type="evidence" value="ECO:0007669"/>
    <property type="project" value="InterPro"/>
</dbReference>
<dbReference type="GO" id="GO:0008270">
    <property type="term" value="F:zinc ion binding"/>
    <property type="evidence" value="ECO:0007669"/>
    <property type="project" value="InterPro"/>
</dbReference>
<dbReference type="GO" id="GO:0006424">
    <property type="term" value="P:glutamyl-tRNA aminoacylation"/>
    <property type="evidence" value="ECO:0007669"/>
    <property type="project" value="UniProtKB-UniRule"/>
</dbReference>
<dbReference type="CDD" id="cd00808">
    <property type="entry name" value="GluRS_core"/>
    <property type="match status" value="1"/>
</dbReference>
<dbReference type="FunFam" id="1.10.10.350:FF:000002">
    <property type="entry name" value="Glutamate--tRNA ligase"/>
    <property type="match status" value="1"/>
</dbReference>
<dbReference type="FunFam" id="3.40.50.620:FF:000007">
    <property type="entry name" value="Glutamate--tRNA ligase"/>
    <property type="match status" value="1"/>
</dbReference>
<dbReference type="Gene3D" id="1.10.10.350">
    <property type="match status" value="1"/>
</dbReference>
<dbReference type="Gene3D" id="3.40.50.620">
    <property type="entry name" value="HUPs"/>
    <property type="match status" value="1"/>
</dbReference>
<dbReference type="HAMAP" id="MF_00022">
    <property type="entry name" value="Glu_tRNA_synth_type1"/>
    <property type="match status" value="1"/>
</dbReference>
<dbReference type="InterPro" id="IPR045462">
    <property type="entry name" value="aa-tRNA-synth_I_cd-bd"/>
</dbReference>
<dbReference type="InterPro" id="IPR020751">
    <property type="entry name" value="aa-tRNA-synth_I_codon-bd_sub2"/>
</dbReference>
<dbReference type="InterPro" id="IPR001412">
    <property type="entry name" value="aa-tRNA-synth_I_CS"/>
</dbReference>
<dbReference type="InterPro" id="IPR008925">
    <property type="entry name" value="aa_tRNA-synth_I_cd-bd_sf"/>
</dbReference>
<dbReference type="InterPro" id="IPR004527">
    <property type="entry name" value="Glu-tRNA-ligase_bac/mito"/>
</dbReference>
<dbReference type="InterPro" id="IPR000924">
    <property type="entry name" value="Glu/Gln-tRNA-synth"/>
</dbReference>
<dbReference type="InterPro" id="IPR020058">
    <property type="entry name" value="Glu/Gln-tRNA-synth_Ib_cat-dom"/>
</dbReference>
<dbReference type="InterPro" id="IPR049940">
    <property type="entry name" value="GluQ/Sye"/>
</dbReference>
<dbReference type="InterPro" id="IPR033910">
    <property type="entry name" value="GluRS_core"/>
</dbReference>
<dbReference type="InterPro" id="IPR014729">
    <property type="entry name" value="Rossmann-like_a/b/a_fold"/>
</dbReference>
<dbReference type="NCBIfam" id="TIGR00464">
    <property type="entry name" value="gltX_bact"/>
    <property type="match status" value="1"/>
</dbReference>
<dbReference type="PANTHER" id="PTHR43311">
    <property type="entry name" value="GLUTAMATE--TRNA LIGASE"/>
    <property type="match status" value="1"/>
</dbReference>
<dbReference type="PANTHER" id="PTHR43311:SF2">
    <property type="entry name" value="GLUTAMATE--TRNA LIGASE, MITOCHONDRIAL-RELATED"/>
    <property type="match status" value="1"/>
</dbReference>
<dbReference type="Pfam" id="PF19269">
    <property type="entry name" value="Anticodon_2"/>
    <property type="match status" value="1"/>
</dbReference>
<dbReference type="Pfam" id="PF00749">
    <property type="entry name" value="tRNA-synt_1c"/>
    <property type="match status" value="1"/>
</dbReference>
<dbReference type="PRINTS" id="PR00987">
    <property type="entry name" value="TRNASYNTHGLU"/>
</dbReference>
<dbReference type="SUPFAM" id="SSF48163">
    <property type="entry name" value="An anticodon-binding domain of class I aminoacyl-tRNA synthetases"/>
    <property type="match status" value="1"/>
</dbReference>
<dbReference type="SUPFAM" id="SSF52374">
    <property type="entry name" value="Nucleotidylyl transferase"/>
    <property type="match status" value="1"/>
</dbReference>
<dbReference type="PROSITE" id="PS00178">
    <property type="entry name" value="AA_TRNA_LIGASE_I"/>
    <property type="match status" value="1"/>
</dbReference>
<protein>
    <recommendedName>
        <fullName evidence="1">Glutamate--tRNA ligase</fullName>
        <ecNumber evidence="1">6.1.1.17</ecNumber>
    </recommendedName>
    <alternativeName>
        <fullName evidence="1">Glutamyl-tRNA synthetase</fullName>
        <shortName evidence="1">GluRS</shortName>
    </alternativeName>
</protein>
<reference key="1">
    <citation type="journal article" date="2006" name="Proc. Natl. Acad. Sci. U.S.A.">
        <title>Multireplicon genome architecture of Lactobacillus salivarius.</title>
        <authorList>
            <person name="Claesson M.J."/>
            <person name="Li Y."/>
            <person name="Leahy S."/>
            <person name="Canchaya C."/>
            <person name="van Pijkeren J.P."/>
            <person name="Cerdeno-Tarraga A.M."/>
            <person name="Parkhill J."/>
            <person name="Flynn S."/>
            <person name="O'Sullivan G.C."/>
            <person name="Collins J.K."/>
            <person name="Higgins D."/>
            <person name="Shanahan F."/>
            <person name="Fitzgerald G.F."/>
            <person name="van Sinderen D."/>
            <person name="O'Toole P.W."/>
        </authorList>
    </citation>
    <scope>NUCLEOTIDE SEQUENCE [LARGE SCALE GENOMIC DNA]</scope>
    <source>
        <strain>UCC118</strain>
    </source>
</reference>
<accession>Q1WSS4</accession>